<protein>
    <recommendedName>
        <fullName evidence="1">Cobalt-precorrin-5B C(1)-methyltransferase</fullName>
        <ecNumber evidence="1">2.1.1.195</ecNumber>
    </recommendedName>
    <alternativeName>
        <fullName evidence="1">Cobalt-precorrin-6A synthase</fullName>
    </alternativeName>
</protein>
<reference key="1">
    <citation type="journal article" date="2002" name="Genome Res.">
        <title>The genome of Methanosarcina acetivorans reveals extensive metabolic and physiological diversity.</title>
        <authorList>
            <person name="Galagan J.E."/>
            <person name="Nusbaum C."/>
            <person name="Roy A."/>
            <person name="Endrizzi M.G."/>
            <person name="Macdonald P."/>
            <person name="FitzHugh W."/>
            <person name="Calvo S."/>
            <person name="Engels R."/>
            <person name="Smirnov S."/>
            <person name="Atnoor D."/>
            <person name="Brown A."/>
            <person name="Allen N."/>
            <person name="Naylor J."/>
            <person name="Stange-Thomann N."/>
            <person name="DeArellano K."/>
            <person name="Johnson R."/>
            <person name="Linton L."/>
            <person name="McEwan P."/>
            <person name="McKernan K."/>
            <person name="Talamas J."/>
            <person name="Tirrell A."/>
            <person name="Ye W."/>
            <person name="Zimmer A."/>
            <person name="Barber R.D."/>
            <person name="Cann I."/>
            <person name="Graham D.E."/>
            <person name="Grahame D.A."/>
            <person name="Guss A.M."/>
            <person name="Hedderich R."/>
            <person name="Ingram-Smith C."/>
            <person name="Kuettner H.C."/>
            <person name="Krzycki J.A."/>
            <person name="Leigh J.A."/>
            <person name="Li W."/>
            <person name="Liu J."/>
            <person name="Mukhopadhyay B."/>
            <person name="Reeve J.N."/>
            <person name="Smith K."/>
            <person name="Springer T.A."/>
            <person name="Umayam L.A."/>
            <person name="White O."/>
            <person name="White R.H."/>
            <person name="de Macario E.C."/>
            <person name="Ferry J.G."/>
            <person name="Jarrell K.F."/>
            <person name="Jing H."/>
            <person name="Macario A.J.L."/>
            <person name="Paulsen I.T."/>
            <person name="Pritchett M."/>
            <person name="Sowers K.R."/>
            <person name="Swanson R.V."/>
            <person name="Zinder S.H."/>
            <person name="Lander E."/>
            <person name="Metcalf W.W."/>
            <person name="Birren B."/>
        </authorList>
    </citation>
    <scope>NUCLEOTIDE SEQUENCE [LARGE SCALE GENOMIC DNA]</scope>
    <source>
        <strain>ATCC 35395 / DSM 2834 / JCM 12185 / C2A</strain>
    </source>
</reference>
<proteinExistence type="inferred from homology"/>
<name>CBID_METAC</name>
<evidence type="ECO:0000255" key="1">
    <source>
        <dbReference type="HAMAP-Rule" id="MF_00787"/>
    </source>
</evidence>
<dbReference type="EC" id="2.1.1.195" evidence="1"/>
<dbReference type="EMBL" id="AE010299">
    <property type="protein sequence ID" value="AAM03965.1"/>
    <property type="molecule type" value="Genomic_DNA"/>
</dbReference>
<dbReference type="RefSeq" id="WP_011020570.1">
    <property type="nucleotide sequence ID" value="NC_003552.1"/>
</dbReference>
<dbReference type="SMR" id="Q8TTB6"/>
<dbReference type="FunCoup" id="Q8TTB6">
    <property type="interactions" value="94"/>
</dbReference>
<dbReference type="STRING" id="188937.MA_0521"/>
<dbReference type="EnsemblBacteria" id="AAM03965">
    <property type="protein sequence ID" value="AAM03965"/>
    <property type="gene ID" value="MA_0521"/>
</dbReference>
<dbReference type="GeneID" id="1472413"/>
<dbReference type="KEGG" id="mac:MA_0521"/>
<dbReference type="HOGENOM" id="CLU_820433_0_0_2"/>
<dbReference type="InParanoid" id="Q8TTB6"/>
<dbReference type="OrthoDB" id="10423at2157"/>
<dbReference type="PhylomeDB" id="Q8TTB6"/>
<dbReference type="UniPathway" id="UPA00148">
    <property type="reaction ID" value="UER00227"/>
</dbReference>
<dbReference type="Proteomes" id="UP000002487">
    <property type="component" value="Chromosome"/>
</dbReference>
<dbReference type="GO" id="GO:0043780">
    <property type="term" value="F:cobalt-precorrin-5B C1-methyltransferase activity"/>
    <property type="evidence" value="ECO:0007669"/>
    <property type="project" value="RHEA"/>
</dbReference>
<dbReference type="GO" id="GO:0019251">
    <property type="term" value="P:anaerobic cobalamin biosynthetic process"/>
    <property type="evidence" value="ECO:0007669"/>
    <property type="project" value="UniProtKB-UniRule"/>
</dbReference>
<dbReference type="GO" id="GO:0032259">
    <property type="term" value="P:methylation"/>
    <property type="evidence" value="ECO:0007669"/>
    <property type="project" value="UniProtKB-KW"/>
</dbReference>
<dbReference type="Gene3D" id="3.30.2110.10">
    <property type="entry name" value="CbiD-like"/>
    <property type="match status" value="1"/>
</dbReference>
<dbReference type="Gene3D" id="3.40.50.10720">
    <property type="entry name" value="CbiD-like domains"/>
    <property type="match status" value="1"/>
</dbReference>
<dbReference type="HAMAP" id="MF_00787">
    <property type="entry name" value="CbiD"/>
    <property type="match status" value="1"/>
</dbReference>
<dbReference type="InterPro" id="IPR002748">
    <property type="entry name" value="CbiD"/>
</dbReference>
<dbReference type="InterPro" id="IPR036074">
    <property type="entry name" value="CbiD_sf"/>
</dbReference>
<dbReference type="NCBIfam" id="NF000855">
    <property type="entry name" value="PRK00075.2-4"/>
    <property type="match status" value="1"/>
</dbReference>
<dbReference type="NCBIfam" id="NF000856">
    <property type="entry name" value="PRK00075.2-5"/>
    <property type="match status" value="1"/>
</dbReference>
<dbReference type="PANTHER" id="PTHR35863">
    <property type="entry name" value="COBALT-PRECORRIN-5B C(1)-METHYLTRANSFERASE"/>
    <property type="match status" value="1"/>
</dbReference>
<dbReference type="PANTHER" id="PTHR35863:SF1">
    <property type="entry name" value="COBALT-PRECORRIN-5B C(1)-METHYLTRANSFERASE"/>
    <property type="match status" value="1"/>
</dbReference>
<dbReference type="Pfam" id="PF01888">
    <property type="entry name" value="CbiD"/>
    <property type="match status" value="1"/>
</dbReference>
<dbReference type="PIRSF" id="PIRSF026782">
    <property type="entry name" value="CbiD"/>
    <property type="match status" value="1"/>
</dbReference>
<dbReference type="SUPFAM" id="SSF111342">
    <property type="entry name" value="CbiD-like"/>
    <property type="match status" value="1"/>
</dbReference>
<feature type="chain" id="PRO_0000141691" description="Cobalt-precorrin-5B C(1)-methyltransferase">
    <location>
        <begin position="1"/>
        <end position="339"/>
    </location>
</feature>
<gene>
    <name evidence="1" type="primary">cbiD</name>
    <name type="ordered locus">MA_0521</name>
</gene>
<accession>Q8TTB6</accession>
<comment type="function">
    <text evidence="1">Catalyzes the methylation of C-1 in cobalt-precorrin-5B to form cobalt-precorrin-6A.</text>
</comment>
<comment type="catalytic activity">
    <reaction evidence="1">
        <text>Co-precorrin-5B + S-adenosyl-L-methionine = Co-precorrin-6A + S-adenosyl-L-homocysteine</text>
        <dbReference type="Rhea" id="RHEA:26285"/>
        <dbReference type="ChEBI" id="CHEBI:57856"/>
        <dbReference type="ChEBI" id="CHEBI:59789"/>
        <dbReference type="ChEBI" id="CHEBI:60063"/>
        <dbReference type="ChEBI" id="CHEBI:60064"/>
        <dbReference type="EC" id="2.1.1.195"/>
    </reaction>
</comment>
<comment type="pathway">
    <text evidence="1">Cofactor biosynthesis; adenosylcobalamin biosynthesis; cob(II)yrinate a,c-diamide from sirohydrochlorin (anaerobic route): step 6/10.</text>
</comment>
<comment type="similarity">
    <text evidence="1">Belongs to the CbiD family.</text>
</comment>
<organism>
    <name type="scientific">Methanosarcina acetivorans (strain ATCC 35395 / DSM 2834 / JCM 12185 / C2A)</name>
    <dbReference type="NCBI Taxonomy" id="188937"/>
    <lineage>
        <taxon>Archaea</taxon>
        <taxon>Methanobacteriati</taxon>
        <taxon>Methanobacteriota</taxon>
        <taxon>Stenosarchaea group</taxon>
        <taxon>Methanomicrobia</taxon>
        <taxon>Methanosarcinales</taxon>
        <taxon>Methanosarcinaceae</taxon>
        <taxon>Methanosarcina</taxon>
    </lineage>
</organism>
<keyword id="KW-0169">Cobalamin biosynthesis</keyword>
<keyword id="KW-0489">Methyltransferase</keyword>
<keyword id="KW-1185">Reference proteome</keyword>
<keyword id="KW-0949">S-adenosyl-L-methionine</keyword>
<keyword id="KW-0808">Transferase</keyword>
<sequence length="339" mass="36210">MIDPVNNFKIPEEWIARSGLPREELEKNVASGMIVILSDGSVLKRGYTTGTTASAAAKAAVLSLKKTVDSVSVPTPVGLRAYLEVSKSSPGRAVVKKIPNDHESDVTRGLEFVGEAREAEGISILGGKGIGIVKRDGLQVPKGKPAINPKPMEQIRAAVQEAVEELGLKGAEVTILIPEGERIGKETLNSRIGVEGGISVLGSTGFVEPWNDHLGEMRGDLIRCTDKVVLTTGRIGMKYSHMLFPDYTVVMVGSRISEGLDNASGDIIICGLPGLVLKWGNPKMLEGSGYATVVEMLEKAPEHERLKEAFEMAVEKGKGARIVVIDRDGSVLMDSKSGK</sequence>